<gene>
    <name evidence="1" type="primary">hcaB</name>
    <name type="ordered locus">ECUMN_2861</name>
</gene>
<proteinExistence type="inferred from homology"/>
<feature type="chain" id="PRO_1000186969" description="3-phenylpropionate-dihydrodiol/cinnamic acid-dihydrodiol dehydrogenase">
    <location>
        <begin position="1"/>
        <end position="270"/>
    </location>
</feature>
<feature type="active site" description="Proton acceptor" evidence="1">
    <location>
        <position position="156"/>
    </location>
</feature>
<feature type="binding site" evidence="1">
    <location>
        <begin position="10"/>
        <end position="34"/>
    </location>
    <ligand>
        <name>NAD(+)</name>
        <dbReference type="ChEBI" id="CHEBI:57540"/>
    </ligand>
</feature>
<feature type="binding site" evidence="1">
    <location>
        <position position="143"/>
    </location>
    <ligand>
        <name>substrate</name>
    </ligand>
</feature>
<evidence type="ECO:0000255" key="1">
    <source>
        <dbReference type="HAMAP-Rule" id="MF_01647"/>
    </source>
</evidence>
<protein>
    <recommendedName>
        <fullName evidence="1">3-phenylpropionate-dihydrodiol/cinnamic acid-dihydrodiol dehydrogenase</fullName>
        <ecNumber evidence="1">1.3.1.87</ecNumber>
    </recommendedName>
    <alternativeName>
        <fullName evidence="1">2,3-dihydroxy-2,3-dihydrophenylpropionate dehydrogenase</fullName>
    </alternativeName>
    <alternativeName>
        <fullName evidence="1">3-(cis-5,6-dihydroxycyclohexa-1,3-dien-1-yl)propanoate dehydrogenase</fullName>
    </alternativeName>
    <alternativeName>
        <fullName evidence="1">CI-dihydrodiol dehydrogenase</fullName>
    </alternativeName>
    <alternativeName>
        <fullName evidence="1">Cis-3-(2-carboxyethenyl)-3,5-cyclohexadiene-1,2-diol dehydrogenase</fullName>
    </alternativeName>
    <alternativeName>
        <fullName evidence="1">Cis-3-(2-carboxyethyl)-3,5-cyclohexadiene-1,2-diol dehydrogenase</fullName>
    </alternativeName>
    <alternativeName>
        <fullName evidence="1">PP-dihydrodiol dehydrogenase</fullName>
    </alternativeName>
</protein>
<name>HCAB_ECOLU</name>
<organism>
    <name type="scientific">Escherichia coli O17:K52:H18 (strain UMN026 / ExPEC)</name>
    <dbReference type="NCBI Taxonomy" id="585056"/>
    <lineage>
        <taxon>Bacteria</taxon>
        <taxon>Pseudomonadati</taxon>
        <taxon>Pseudomonadota</taxon>
        <taxon>Gammaproteobacteria</taxon>
        <taxon>Enterobacterales</taxon>
        <taxon>Enterobacteriaceae</taxon>
        <taxon>Escherichia</taxon>
    </lineage>
</organism>
<accession>B7N6C8</accession>
<sequence>MSDLHNESIFITGGGSGLGLALVERFIEEGAQVATLELSAAKVASLRQRFGEHILAVEGNVTCYADYQRAVNQILTRSGKLDCFIGNAGIWDHNASLVNTPAETLETGFHELFNVNVLGYLLGAKACAPALIASEGSMIFTLSNAAWYPGGGGPLYTASKHAATGLIRQLAYELAPKVRVNGVGPCGMASDLRGPQALGQSETSIMQSLTPEKIAAILPLQFFPQPADFTGPYVMLASRRNNRALSGVMINADAGLAIRGIRHVAAGLDL</sequence>
<comment type="function">
    <text evidence="1">Converts 3-phenylpropionate-dihydrodiol (PP-dihydrodiol) and cinnamic acid-dihydrodiol (CI-dihydrodiol) into 3-(2,3-dihydroxylphenyl)propanoic acid (DHPP) and 2,3-dihydroxicinnamic acid (DHCI), respectively.</text>
</comment>
<comment type="catalytic activity">
    <reaction evidence="1">
        <text>3-(cis-5,6-dihydroxycyclohexa-1,3-dien-1-yl)propanoate + NAD(+) = 3-(2,3-dihydroxyphenyl)propanoate + NADH + H(+)</text>
        <dbReference type="Rhea" id="RHEA:25062"/>
        <dbReference type="ChEBI" id="CHEBI:15378"/>
        <dbReference type="ChEBI" id="CHEBI:46951"/>
        <dbReference type="ChEBI" id="CHEBI:57540"/>
        <dbReference type="ChEBI" id="CHEBI:57945"/>
        <dbReference type="ChEBI" id="CHEBI:60087"/>
        <dbReference type="EC" id="1.3.1.87"/>
    </reaction>
</comment>
<comment type="catalytic activity">
    <reaction evidence="1">
        <text>(2E)-3-(cis-5,6-dihydroxycyclohexa-1,3-dien-1-yl)prop-2-enoate + NAD(+) = (2E)-3-(2,3-dihydroxyphenyl)prop-2-enoate + NADH + H(+)</text>
        <dbReference type="Rhea" id="RHEA:25066"/>
        <dbReference type="ChEBI" id="CHEBI:15378"/>
        <dbReference type="ChEBI" id="CHEBI:57540"/>
        <dbReference type="ChEBI" id="CHEBI:57945"/>
        <dbReference type="ChEBI" id="CHEBI:58642"/>
        <dbReference type="ChEBI" id="CHEBI:61451"/>
        <dbReference type="EC" id="1.3.1.87"/>
    </reaction>
</comment>
<comment type="pathway">
    <text evidence="1">Aromatic compound metabolism; 3-phenylpropanoate degradation.</text>
</comment>
<comment type="similarity">
    <text evidence="1">Belongs to the short-chain dehydrogenases/reductases (SDR) family.</text>
</comment>
<dbReference type="EC" id="1.3.1.87" evidence="1"/>
<dbReference type="EMBL" id="CU928163">
    <property type="protein sequence ID" value="CAR14037.1"/>
    <property type="molecule type" value="Genomic_DNA"/>
</dbReference>
<dbReference type="RefSeq" id="WP_001281389.1">
    <property type="nucleotide sequence ID" value="NC_011751.1"/>
</dbReference>
<dbReference type="RefSeq" id="YP_002413563.1">
    <property type="nucleotide sequence ID" value="NC_011751.1"/>
</dbReference>
<dbReference type="SMR" id="B7N6C8"/>
<dbReference type="STRING" id="585056.ECUMN_2861"/>
<dbReference type="KEGG" id="eum:ECUMN_2861"/>
<dbReference type="PATRIC" id="fig|585056.7.peg.3048"/>
<dbReference type="HOGENOM" id="CLU_010194_1_0_6"/>
<dbReference type="UniPathway" id="UPA00714"/>
<dbReference type="Proteomes" id="UP000007097">
    <property type="component" value="Chromosome"/>
</dbReference>
<dbReference type="GO" id="GO:0018498">
    <property type="term" value="F:2,3-dihydroxy-2,3-dihydro-phenylpropionate dehydrogenase activity"/>
    <property type="evidence" value="ECO:0007669"/>
    <property type="project" value="UniProtKB-UniRule"/>
</dbReference>
<dbReference type="GO" id="GO:0019380">
    <property type="term" value="P:3-phenylpropionate catabolic process"/>
    <property type="evidence" value="ECO:0007669"/>
    <property type="project" value="UniProtKB-UniRule"/>
</dbReference>
<dbReference type="CDD" id="cd05348">
    <property type="entry name" value="BphB-like_SDR_c"/>
    <property type="match status" value="1"/>
</dbReference>
<dbReference type="FunFam" id="3.40.50.720:FF:000151">
    <property type="entry name" value="3-phenylpropionate-dihydrodiol/cinnamic acid-dihydrodiol dehydrogenase"/>
    <property type="match status" value="1"/>
</dbReference>
<dbReference type="Gene3D" id="3.40.50.720">
    <property type="entry name" value="NAD(P)-binding Rossmann-like Domain"/>
    <property type="match status" value="1"/>
</dbReference>
<dbReference type="HAMAP" id="MF_01647">
    <property type="entry name" value="HcaB"/>
    <property type="match status" value="1"/>
</dbReference>
<dbReference type="InterPro" id="IPR047950">
    <property type="entry name" value="BphB-like_SDR"/>
</dbReference>
<dbReference type="InterPro" id="IPR023643">
    <property type="entry name" value="Dihydrodiol_DH_HcaB"/>
</dbReference>
<dbReference type="InterPro" id="IPR036291">
    <property type="entry name" value="NAD(P)-bd_dom_sf"/>
</dbReference>
<dbReference type="InterPro" id="IPR020904">
    <property type="entry name" value="Sc_DH/Rdtase_CS"/>
</dbReference>
<dbReference type="InterPro" id="IPR002347">
    <property type="entry name" value="SDR_fam"/>
</dbReference>
<dbReference type="NCBIfam" id="NF042950">
    <property type="entry name" value="3PPDhyd_Dh_HcaB"/>
    <property type="match status" value="1"/>
</dbReference>
<dbReference type="NCBIfam" id="NF004849">
    <property type="entry name" value="PRK06200.1"/>
    <property type="match status" value="1"/>
</dbReference>
<dbReference type="PANTHER" id="PTHR43943:SF17">
    <property type="entry name" value="3-PHENYLPROPIONATE-DIHYDRODIOL_CINNAMIC ACID-DIHYDRODIOL DEHYDROGENASE"/>
    <property type="match status" value="1"/>
</dbReference>
<dbReference type="PANTHER" id="PTHR43943">
    <property type="entry name" value="DEHYDROGENASE/REDUCTASE (SDR FAMILY) MEMBER 4"/>
    <property type="match status" value="1"/>
</dbReference>
<dbReference type="Pfam" id="PF00106">
    <property type="entry name" value="adh_short"/>
    <property type="match status" value="1"/>
</dbReference>
<dbReference type="PRINTS" id="PR00081">
    <property type="entry name" value="GDHRDH"/>
</dbReference>
<dbReference type="PRINTS" id="PR00080">
    <property type="entry name" value="SDRFAMILY"/>
</dbReference>
<dbReference type="SUPFAM" id="SSF51735">
    <property type="entry name" value="NAD(P)-binding Rossmann-fold domains"/>
    <property type="match status" value="1"/>
</dbReference>
<dbReference type="PROSITE" id="PS00061">
    <property type="entry name" value="ADH_SHORT"/>
    <property type="match status" value="1"/>
</dbReference>
<keyword id="KW-0058">Aromatic hydrocarbons catabolism</keyword>
<keyword id="KW-0520">NAD</keyword>
<keyword id="KW-0560">Oxidoreductase</keyword>
<reference key="1">
    <citation type="journal article" date="2009" name="PLoS Genet.">
        <title>Organised genome dynamics in the Escherichia coli species results in highly diverse adaptive paths.</title>
        <authorList>
            <person name="Touchon M."/>
            <person name="Hoede C."/>
            <person name="Tenaillon O."/>
            <person name="Barbe V."/>
            <person name="Baeriswyl S."/>
            <person name="Bidet P."/>
            <person name="Bingen E."/>
            <person name="Bonacorsi S."/>
            <person name="Bouchier C."/>
            <person name="Bouvet O."/>
            <person name="Calteau A."/>
            <person name="Chiapello H."/>
            <person name="Clermont O."/>
            <person name="Cruveiller S."/>
            <person name="Danchin A."/>
            <person name="Diard M."/>
            <person name="Dossat C."/>
            <person name="Karoui M.E."/>
            <person name="Frapy E."/>
            <person name="Garry L."/>
            <person name="Ghigo J.M."/>
            <person name="Gilles A.M."/>
            <person name="Johnson J."/>
            <person name="Le Bouguenec C."/>
            <person name="Lescat M."/>
            <person name="Mangenot S."/>
            <person name="Martinez-Jehanne V."/>
            <person name="Matic I."/>
            <person name="Nassif X."/>
            <person name="Oztas S."/>
            <person name="Petit M.A."/>
            <person name="Pichon C."/>
            <person name="Rouy Z."/>
            <person name="Ruf C.S."/>
            <person name="Schneider D."/>
            <person name="Tourret J."/>
            <person name="Vacherie B."/>
            <person name="Vallenet D."/>
            <person name="Medigue C."/>
            <person name="Rocha E.P.C."/>
            <person name="Denamur E."/>
        </authorList>
    </citation>
    <scope>NUCLEOTIDE SEQUENCE [LARGE SCALE GENOMIC DNA]</scope>
    <source>
        <strain>UMN026 / ExPEC</strain>
    </source>
</reference>